<evidence type="ECO:0000255" key="1">
    <source>
        <dbReference type="HAMAP-Rule" id="MF_01841"/>
    </source>
</evidence>
<dbReference type="EC" id="3.5.3.12" evidence="1"/>
<dbReference type="EMBL" id="CP000503">
    <property type="protein sequence ID" value="ABM24095.1"/>
    <property type="molecule type" value="Genomic_DNA"/>
</dbReference>
<dbReference type="RefSeq" id="WP_011788602.1">
    <property type="nucleotide sequence ID" value="NC_008750.1"/>
</dbReference>
<dbReference type="SMR" id="A1RHF0"/>
<dbReference type="KEGG" id="shw:Sputw3181_1252"/>
<dbReference type="HOGENOM" id="CLU_037682_1_0_6"/>
<dbReference type="Proteomes" id="UP000002597">
    <property type="component" value="Chromosome"/>
</dbReference>
<dbReference type="GO" id="GO:0047632">
    <property type="term" value="F:agmatine deiminase activity"/>
    <property type="evidence" value="ECO:0007669"/>
    <property type="project" value="UniProtKB-UniRule"/>
</dbReference>
<dbReference type="GO" id="GO:0004668">
    <property type="term" value="F:protein-arginine deiminase activity"/>
    <property type="evidence" value="ECO:0007669"/>
    <property type="project" value="InterPro"/>
</dbReference>
<dbReference type="GO" id="GO:0009446">
    <property type="term" value="P:putrescine biosynthetic process"/>
    <property type="evidence" value="ECO:0007669"/>
    <property type="project" value="InterPro"/>
</dbReference>
<dbReference type="Gene3D" id="3.75.10.10">
    <property type="entry name" value="L-arginine/glycine Amidinotransferase, Chain A"/>
    <property type="match status" value="1"/>
</dbReference>
<dbReference type="HAMAP" id="MF_01841">
    <property type="entry name" value="Agmatine_deimin"/>
    <property type="match status" value="1"/>
</dbReference>
<dbReference type="InterPro" id="IPR017754">
    <property type="entry name" value="Agmatine_deiminase"/>
</dbReference>
<dbReference type="InterPro" id="IPR007466">
    <property type="entry name" value="Peptidyl-Arg-deiminase_porph"/>
</dbReference>
<dbReference type="NCBIfam" id="TIGR03380">
    <property type="entry name" value="agmatine_aguA"/>
    <property type="match status" value="1"/>
</dbReference>
<dbReference type="NCBIfam" id="NF010070">
    <property type="entry name" value="PRK13551.1"/>
    <property type="match status" value="1"/>
</dbReference>
<dbReference type="PANTHER" id="PTHR31377">
    <property type="entry name" value="AGMATINE DEIMINASE-RELATED"/>
    <property type="match status" value="1"/>
</dbReference>
<dbReference type="PANTHER" id="PTHR31377:SF0">
    <property type="entry name" value="AGMATINE DEIMINASE-RELATED"/>
    <property type="match status" value="1"/>
</dbReference>
<dbReference type="Pfam" id="PF04371">
    <property type="entry name" value="PAD_porph"/>
    <property type="match status" value="1"/>
</dbReference>
<dbReference type="SUPFAM" id="SSF55909">
    <property type="entry name" value="Pentein"/>
    <property type="match status" value="1"/>
</dbReference>
<proteinExistence type="inferred from homology"/>
<reference key="1">
    <citation type="submission" date="2006-12" db="EMBL/GenBank/DDBJ databases">
        <title>Complete sequence of Shewanella sp. W3-18-1.</title>
        <authorList>
            <consortium name="US DOE Joint Genome Institute"/>
            <person name="Copeland A."/>
            <person name="Lucas S."/>
            <person name="Lapidus A."/>
            <person name="Barry K."/>
            <person name="Detter J.C."/>
            <person name="Glavina del Rio T."/>
            <person name="Hammon N."/>
            <person name="Israni S."/>
            <person name="Dalin E."/>
            <person name="Tice H."/>
            <person name="Pitluck S."/>
            <person name="Chain P."/>
            <person name="Malfatti S."/>
            <person name="Shin M."/>
            <person name="Vergez L."/>
            <person name="Schmutz J."/>
            <person name="Larimer F."/>
            <person name="Land M."/>
            <person name="Hauser L."/>
            <person name="Kyrpides N."/>
            <person name="Lykidis A."/>
            <person name="Tiedje J."/>
            <person name="Richardson P."/>
        </authorList>
    </citation>
    <scope>NUCLEOTIDE SEQUENCE [LARGE SCALE GENOMIC DNA]</scope>
    <source>
        <strain>W3-18-1</strain>
    </source>
</reference>
<accession>A1RHF0</accession>
<name>AGUA_SHESW</name>
<gene>
    <name evidence="1" type="primary">aguA</name>
    <name type="ordered locus">Sputw3181_1252</name>
</gene>
<feature type="chain" id="PRO_1000070574" description="Putative agmatine deiminase">
    <location>
        <begin position="1"/>
        <end position="370"/>
    </location>
</feature>
<feature type="active site" description="Amidino-cysteine intermediate" evidence="1">
    <location>
        <position position="361"/>
    </location>
</feature>
<protein>
    <recommendedName>
        <fullName evidence="1">Putative agmatine deiminase</fullName>
        <ecNumber evidence="1">3.5.3.12</ecNumber>
    </recommendedName>
    <alternativeName>
        <fullName evidence="1">Agmatine iminohydrolase</fullName>
    </alternativeName>
</protein>
<sequence>MTNVNVDVTPLTTKPSQDGFYMPAEWAAQQAVWMIWPYRPDNWRAAGAYAQATFAKVADAIGAATPVYMGVPKAFLAEAKAVMPSHVTLVEMDSNDCWARDTGPTVVVNDNGECRGVDWGFNAWGGHNGGLYFPWDKDEQVAQQMLAQHGFARYSAPLILEGGSIHVDGEGTCMTSAECLLNANRNPELTKEQIEDLLRDYLNVKQFIWLQDGVYMDETDGHIDNMSCFARPGEVILHWTDDETDPQYPRSKAALEVLQNTVDAKGRKLKIHLLPQPGPLYCSEEESKGVTEGTGVPRTAGERLAGSYVNFLITNHRIVFPLLDPATDDIAAQKLQEIFPEHEIVGVPAREILLGGGNIHCITQQIPAGK</sequence>
<keyword id="KW-0378">Hydrolase</keyword>
<organism>
    <name type="scientific">Shewanella sp. (strain W3-18-1)</name>
    <dbReference type="NCBI Taxonomy" id="351745"/>
    <lineage>
        <taxon>Bacteria</taxon>
        <taxon>Pseudomonadati</taxon>
        <taxon>Pseudomonadota</taxon>
        <taxon>Gammaproteobacteria</taxon>
        <taxon>Alteromonadales</taxon>
        <taxon>Shewanellaceae</taxon>
        <taxon>Shewanella</taxon>
    </lineage>
</organism>
<comment type="catalytic activity">
    <reaction evidence="1">
        <text>agmatine + H2O = N-carbamoylputrescine + NH4(+)</text>
        <dbReference type="Rhea" id="RHEA:18037"/>
        <dbReference type="ChEBI" id="CHEBI:15377"/>
        <dbReference type="ChEBI" id="CHEBI:28938"/>
        <dbReference type="ChEBI" id="CHEBI:58145"/>
        <dbReference type="ChEBI" id="CHEBI:58318"/>
        <dbReference type="EC" id="3.5.3.12"/>
    </reaction>
</comment>
<comment type="similarity">
    <text evidence="1">Belongs to the agmatine deiminase family.</text>
</comment>